<reference key="1">
    <citation type="journal article" date="2007" name="Proc. Natl. Acad. Sci. U.S.A.">
        <title>Genome sequencing reveals complex secondary metabolome in the marine actinomycete Salinispora tropica.</title>
        <authorList>
            <person name="Udwary D.W."/>
            <person name="Zeigler L."/>
            <person name="Asolkar R.N."/>
            <person name="Singan V."/>
            <person name="Lapidus A."/>
            <person name="Fenical W."/>
            <person name="Jensen P.R."/>
            <person name="Moore B.S."/>
        </authorList>
    </citation>
    <scope>NUCLEOTIDE SEQUENCE [LARGE SCALE GENOMIC DNA]</scope>
    <source>
        <strain>ATCC BAA-916 / DSM 44818 / JCM 13857 / NBRC 105044 / CNB-440</strain>
    </source>
</reference>
<accession>A4X610</accession>
<comment type="function">
    <text evidence="1">Catalyzes a trans-dehydration via an enolate intermediate.</text>
</comment>
<comment type="catalytic activity">
    <reaction evidence="1">
        <text>3-dehydroquinate = 3-dehydroshikimate + H2O</text>
        <dbReference type="Rhea" id="RHEA:21096"/>
        <dbReference type="ChEBI" id="CHEBI:15377"/>
        <dbReference type="ChEBI" id="CHEBI:16630"/>
        <dbReference type="ChEBI" id="CHEBI:32364"/>
        <dbReference type="EC" id="4.2.1.10"/>
    </reaction>
</comment>
<comment type="pathway">
    <text evidence="1">Metabolic intermediate biosynthesis; chorismate biosynthesis; chorismate from D-erythrose 4-phosphate and phosphoenolpyruvate: step 3/7.</text>
</comment>
<comment type="subunit">
    <text evidence="1">Homododecamer.</text>
</comment>
<comment type="similarity">
    <text evidence="1">Belongs to the type-II 3-dehydroquinase family.</text>
</comment>
<gene>
    <name evidence="1" type="primary">aroQ</name>
    <name type="ordered locus">Strop_1848</name>
</gene>
<keyword id="KW-0028">Amino-acid biosynthesis</keyword>
<keyword id="KW-0057">Aromatic amino acid biosynthesis</keyword>
<keyword id="KW-0456">Lyase</keyword>
<keyword id="KW-1185">Reference proteome</keyword>
<sequence>MRVYVLNGPNLGRLGTRQPEVYGTTTYADLVELCQQTGRELGLEVVIRQTDAEQELLGWLHEAADLGACVVLNPAAWSHYSIAVRDACALLRAPLVEVHLSNIHAREEFRHHSVVSAVATGVICGLGVDGYRLALHHLAARAR</sequence>
<name>AROQ_SALTO</name>
<dbReference type="EC" id="4.2.1.10" evidence="1"/>
<dbReference type="EMBL" id="CP000667">
    <property type="protein sequence ID" value="ABP54310.1"/>
    <property type="molecule type" value="Genomic_DNA"/>
</dbReference>
<dbReference type="RefSeq" id="WP_011905741.1">
    <property type="nucleotide sequence ID" value="NC_009380.1"/>
</dbReference>
<dbReference type="SMR" id="A4X610"/>
<dbReference type="STRING" id="369723.Strop_1848"/>
<dbReference type="KEGG" id="stp:Strop_1848"/>
<dbReference type="PATRIC" id="fig|369723.5.peg.1896"/>
<dbReference type="eggNOG" id="COG0757">
    <property type="taxonomic scope" value="Bacteria"/>
</dbReference>
<dbReference type="HOGENOM" id="CLU_090968_2_1_11"/>
<dbReference type="UniPathway" id="UPA00053">
    <property type="reaction ID" value="UER00086"/>
</dbReference>
<dbReference type="Proteomes" id="UP000000235">
    <property type="component" value="Chromosome"/>
</dbReference>
<dbReference type="GO" id="GO:0003855">
    <property type="term" value="F:3-dehydroquinate dehydratase activity"/>
    <property type="evidence" value="ECO:0007669"/>
    <property type="project" value="UniProtKB-UniRule"/>
</dbReference>
<dbReference type="GO" id="GO:0008652">
    <property type="term" value="P:amino acid biosynthetic process"/>
    <property type="evidence" value="ECO:0007669"/>
    <property type="project" value="UniProtKB-KW"/>
</dbReference>
<dbReference type="GO" id="GO:0009073">
    <property type="term" value="P:aromatic amino acid family biosynthetic process"/>
    <property type="evidence" value="ECO:0007669"/>
    <property type="project" value="UniProtKB-KW"/>
</dbReference>
<dbReference type="GO" id="GO:0009423">
    <property type="term" value="P:chorismate biosynthetic process"/>
    <property type="evidence" value="ECO:0007669"/>
    <property type="project" value="UniProtKB-UniRule"/>
</dbReference>
<dbReference type="GO" id="GO:0019631">
    <property type="term" value="P:quinate catabolic process"/>
    <property type="evidence" value="ECO:0007669"/>
    <property type="project" value="TreeGrafter"/>
</dbReference>
<dbReference type="CDD" id="cd00466">
    <property type="entry name" value="DHQase_II"/>
    <property type="match status" value="1"/>
</dbReference>
<dbReference type="Gene3D" id="3.40.50.9100">
    <property type="entry name" value="Dehydroquinase, class II"/>
    <property type="match status" value="1"/>
</dbReference>
<dbReference type="HAMAP" id="MF_00169">
    <property type="entry name" value="AroQ"/>
    <property type="match status" value="1"/>
</dbReference>
<dbReference type="InterPro" id="IPR001874">
    <property type="entry name" value="DHquinase_II"/>
</dbReference>
<dbReference type="InterPro" id="IPR018509">
    <property type="entry name" value="DHquinase_II_CS"/>
</dbReference>
<dbReference type="InterPro" id="IPR036441">
    <property type="entry name" value="DHquinase_II_sf"/>
</dbReference>
<dbReference type="NCBIfam" id="TIGR01088">
    <property type="entry name" value="aroQ"/>
    <property type="match status" value="1"/>
</dbReference>
<dbReference type="NCBIfam" id="NF003805">
    <property type="entry name" value="PRK05395.1-2"/>
    <property type="match status" value="1"/>
</dbReference>
<dbReference type="NCBIfam" id="NF003806">
    <property type="entry name" value="PRK05395.1-3"/>
    <property type="match status" value="1"/>
</dbReference>
<dbReference type="NCBIfam" id="NF003807">
    <property type="entry name" value="PRK05395.1-4"/>
    <property type="match status" value="1"/>
</dbReference>
<dbReference type="PANTHER" id="PTHR21272">
    <property type="entry name" value="CATABOLIC 3-DEHYDROQUINASE"/>
    <property type="match status" value="1"/>
</dbReference>
<dbReference type="PANTHER" id="PTHR21272:SF3">
    <property type="entry name" value="CATABOLIC 3-DEHYDROQUINASE"/>
    <property type="match status" value="1"/>
</dbReference>
<dbReference type="Pfam" id="PF01220">
    <property type="entry name" value="DHquinase_II"/>
    <property type="match status" value="1"/>
</dbReference>
<dbReference type="PIRSF" id="PIRSF001399">
    <property type="entry name" value="DHquinase_II"/>
    <property type="match status" value="1"/>
</dbReference>
<dbReference type="SUPFAM" id="SSF52304">
    <property type="entry name" value="Type II 3-dehydroquinate dehydratase"/>
    <property type="match status" value="1"/>
</dbReference>
<dbReference type="PROSITE" id="PS01029">
    <property type="entry name" value="DEHYDROQUINASE_II"/>
    <property type="match status" value="1"/>
</dbReference>
<protein>
    <recommendedName>
        <fullName evidence="1">3-dehydroquinate dehydratase</fullName>
        <shortName evidence="1">3-dehydroquinase</shortName>
        <ecNumber evidence="1">4.2.1.10</ecNumber>
    </recommendedName>
    <alternativeName>
        <fullName evidence="1">Type II DHQase</fullName>
    </alternativeName>
</protein>
<proteinExistence type="inferred from homology"/>
<organism>
    <name type="scientific">Salinispora tropica (strain ATCC BAA-916 / DSM 44818 / JCM 13857 / NBRC 105044 / CNB-440)</name>
    <dbReference type="NCBI Taxonomy" id="369723"/>
    <lineage>
        <taxon>Bacteria</taxon>
        <taxon>Bacillati</taxon>
        <taxon>Actinomycetota</taxon>
        <taxon>Actinomycetes</taxon>
        <taxon>Micromonosporales</taxon>
        <taxon>Micromonosporaceae</taxon>
        <taxon>Salinispora</taxon>
    </lineage>
</organism>
<evidence type="ECO:0000255" key="1">
    <source>
        <dbReference type="HAMAP-Rule" id="MF_00169"/>
    </source>
</evidence>
<feature type="chain" id="PRO_1000077058" description="3-dehydroquinate dehydratase">
    <location>
        <begin position="1"/>
        <end position="143"/>
    </location>
</feature>
<feature type="active site" description="Proton acceptor" evidence="1">
    <location>
        <position position="22"/>
    </location>
</feature>
<feature type="active site" description="Proton donor" evidence="1">
    <location>
        <position position="99"/>
    </location>
</feature>
<feature type="binding site" evidence="1">
    <location>
        <position position="73"/>
    </location>
    <ligand>
        <name>substrate</name>
    </ligand>
</feature>
<feature type="binding site" evidence="1">
    <location>
        <position position="79"/>
    </location>
    <ligand>
        <name>substrate</name>
    </ligand>
</feature>
<feature type="binding site" evidence="1">
    <location>
        <position position="86"/>
    </location>
    <ligand>
        <name>substrate</name>
    </ligand>
</feature>
<feature type="binding site" evidence="1">
    <location>
        <begin position="100"/>
        <end position="101"/>
    </location>
    <ligand>
        <name>substrate</name>
    </ligand>
</feature>
<feature type="binding site" evidence="1">
    <location>
        <position position="110"/>
    </location>
    <ligand>
        <name>substrate</name>
    </ligand>
</feature>
<feature type="site" description="Transition state stabilizer" evidence="1">
    <location>
        <position position="17"/>
    </location>
</feature>